<feature type="chain" id="PRO_1000044391" description="Sec-independent protein translocase protein TatA">
    <location>
        <begin position="1"/>
        <end position="79"/>
    </location>
</feature>
<feature type="transmembrane region" description="Helical" evidence="1">
    <location>
        <begin position="1"/>
        <end position="21"/>
    </location>
</feature>
<feature type="region of interest" description="Disordered" evidence="2">
    <location>
        <begin position="46"/>
        <end position="79"/>
    </location>
</feature>
<feature type="compositionally biased region" description="Basic and acidic residues" evidence="2">
    <location>
        <begin position="66"/>
        <end position="79"/>
    </location>
</feature>
<protein>
    <recommendedName>
        <fullName evidence="1">Sec-independent protein translocase protein TatA</fullName>
    </recommendedName>
</protein>
<name>TATA_HELPH</name>
<comment type="function">
    <text evidence="1">Part of the twin-arginine translocation (Tat) system that transports large folded proteins containing a characteristic twin-arginine motif in their signal peptide across membranes. TatA could form the protein-conducting channel of the Tat system.</text>
</comment>
<comment type="subunit">
    <text evidence="1">The Tat system comprises two distinct complexes: a TatABC complex, containing multiple copies of TatA, TatB and TatC subunits, and a separate TatA complex, containing only TatA subunits. Substrates initially bind to the TatABC complex, which probably triggers association of the separate TatA complex to form the active translocon.</text>
</comment>
<comment type="subcellular location">
    <subcellularLocation>
        <location evidence="1">Cell inner membrane</location>
        <topology evidence="1">Single-pass membrane protein</topology>
    </subcellularLocation>
</comment>
<comment type="similarity">
    <text evidence="1">Belongs to the TatA/E family.</text>
</comment>
<dbReference type="EMBL" id="CP000241">
    <property type="protein sequence ID" value="ABF84390.1"/>
    <property type="molecule type" value="Genomic_DNA"/>
</dbReference>
<dbReference type="RefSeq" id="WP_000508590.1">
    <property type="nucleotide sequence ID" value="NC_008086.1"/>
</dbReference>
<dbReference type="SMR" id="Q1CUI2"/>
<dbReference type="GeneID" id="93236688"/>
<dbReference type="KEGG" id="hpa:HPAG1_0323"/>
<dbReference type="HOGENOM" id="CLU_086034_5_4_7"/>
<dbReference type="GO" id="GO:0033281">
    <property type="term" value="C:TAT protein transport complex"/>
    <property type="evidence" value="ECO:0007669"/>
    <property type="project" value="UniProtKB-UniRule"/>
</dbReference>
<dbReference type="GO" id="GO:0008320">
    <property type="term" value="F:protein transmembrane transporter activity"/>
    <property type="evidence" value="ECO:0007669"/>
    <property type="project" value="UniProtKB-UniRule"/>
</dbReference>
<dbReference type="GO" id="GO:0043953">
    <property type="term" value="P:protein transport by the Tat complex"/>
    <property type="evidence" value="ECO:0007669"/>
    <property type="project" value="UniProtKB-UniRule"/>
</dbReference>
<dbReference type="Gene3D" id="1.20.5.3310">
    <property type="match status" value="1"/>
</dbReference>
<dbReference type="HAMAP" id="MF_00236">
    <property type="entry name" value="TatA_E"/>
    <property type="match status" value="1"/>
</dbReference>
<dbReference type="InterPro" id="IPR003369">
    <property type="entry name" value="TatA/B/E"/>
</dbReference>
<dbReference type="InterPro" id="IPR006312">
    <property type="entry name" value="TatA/E"/>
</dbReference>
<dbReference type="NCBIfam" id="TIGR01411">
    <property type="entry name" value="tatAE"/>
    <property type="match status" value="1"/>
</dbReference>
<dbReference type="PANTHER" id="PTHR42982">
    <property type="entry name" value="SEC-INDEPENDENT PROTEIN TRANSLOCASE PROTEIN TATA"/>
    <property type="match status" value="1"/>
</dbReference>
<dbReference type="PANTHER" id="PTHR42982:SF1">
    <property type="entry name" value="SEC-INDEPENDENT PROTEIN TRANSLOCASE PROTEIN TATA"/>
    <property type="match status" value="1"/>
</dbReference>
<dbReference type="Pfam" id="PF02416">
    <property type="entry name" value="TatA_B_E"/>
    <property type="match status" value="1"/>
</dbReference>
<evidence type="ECO:0000255" key="1">
    <source>
        <dbReference type="HAMAP-Rule" id="MF_00236"/>
    </source>
</evidence>
<evidence type="ECO:0000256" key="2">
    <source>
        <dbReference type="SAM" id="MobiDB-lite"/>
    </source>
</evidence>
<sequence>MGGFTSIWHWVIVLLVIVLLFGAKKIPELAKGLGSGIKNFKKAVKDDEEEAKNEPKTLDAQATQTKVHETSEIKSKQES</sequence>
<reference key="1">
    <citation type="journal article" date="2006" name="Proc. Natl. Acad. Sci. U.S.A.">
        <title>The complete genome sequence of a chronic atrophic gastritis Helicobacter pylori strain: evolution during disease progression.</title>
        <authorList>
            <person name="Oh J.D."/>
            <person name="Kling-Baeckhed H."/>
            <person name="Giannakis M."/>
            <person name="Xu J."/>
            <person name="Fulton R.S."/>
            <person name="Fulton L.A."/>
            <person name="Cordum H.S."/>
            <person name="Wang C."/>
            <person name="Elliott G."/>
            <person name="Edwards J."/>
            <person name="Mardis E.R."/>
            <person name="Engstrand L.G."/>
            <person name="Gordon J.I."/>
        </authorList>
    </citation>
    <scope>NUCLEOTIDE SEQUENCE [LARGE SCALE GENOMIC DNA]</scope>
    <source>
        <strain>HPAG1</strain>
    </source>
</reference>
<organism>
    <name type="scientific">Helicobacter pylori (strain HPAG1)</name>
    <dbReference type="NCBI Taxonomy" id="357544"/>
    <lineage>
        <taxon>Bacteria</taxon>
        <taxon>Pseudomonadati</taxon>
        <taxon>Campylobacterota</taxon>
        <taxon>Epsilonproteobacteria</taxon>
        <taxon>Campylobacterales</taxon>
        <taxon>Helicobacteraceae</taxon>
        <taxon>Helicobacter</taxon>
    </lineage>
</organism>
<accession>Q1CUI2</accession>
<proteinExistence type="inferred from homology"/>
<gene>
    <name evidence="1" type="primary">tatA</name>
    <name type="ordered locus">HPAG1_0323</name>
</gene>
<keyword id="KW-0997">Cell inner membrane</keyword>
<keyword id="KW-1003">Cell membrane</keyword>
<keyword id="KW-0472">Membrane</keyword>
<keyword id="KW-0653">Protein transport</keyword>
<keyword id="KW-0811">Translocation</keyword>
<keyword id="KW-0812">Transmembrane</keyword>
<keyword id="KW-1133">Transmembrane helix</keyword>
<keyword id="KW-0813">Transport</keyword>